<evidence type="ECO:0000255" key="1">
    <source>
        <dbReference type="HAMAP-Rule" id="MF_01558"/>
    </source>
</evidence>
<evidence type="ECO:0000255" key="2">
    <source>
        <dbReference type="PROSITE-ProRule" id="PRU01083"/>
    </source>
</evidence>
<feature type="chain" id="PRO_0000171668" description="Cytidine deaminase">
    <location>
        <begin position="1"/>
        <end position="294"/>
    </location>
</feature>
<feature type="domain" description="CMP/dCMP-type deaminase 1" evidence="2">
    <location>
        <begin position="48"/>
        <end position="168"/>
    </location>
</feature>
<feature type="domain" description="CMP/dCMP-type deaminase 2" evidence="2">
    <location>
        <begin position="186"/>
        <end position="294"/>
    </location>
</feature>
<feature type="active site" description="Proton donor" evidence="1">
    <location>
        <position position="104"/>
    </location>
</feature>
<feature type="binding site" evidence="1">
    <location>
        <begin position="89"/>
        <end position="91"/>
    </location>
    <ligand>
        <name>substrate</name>
    </ligand>
</feature>
<feature type="binding site" evidence="1">
    <location>
        <position position="102"/>
    </location>
    <ligand>
        <name>Zn(2+)</name>
        <dbReference type="ChEBI" id="CHEBI:29105"/>
        <note>catalytic</note>
    </ligand>
</feature>
<feature type="binding site" evidence="1">
    <location>
        <position position="129"/>
    </location>
    <ligand>
        <name>Zn(2+)</name>
        <dbReference type="ChEBI" id="CHEBI:29105"/>
        <note>catalytic</note>
    </ligand>
</feature>
<feature type="binding site" evidence="1">
    <location>
        <position position="132"/>
    </location>
    <ligand>
        <name>Zn(2+)</name>
        <dbReference type="ChEBI" id="CHEBI:29105"/>
        <note>catalytic</note>
    </ligand>
</feature>
<sequence>MHPRFQTAFAQLADNLQSALEPILADKYFPALLTGEQVSSLKSATGLDEDALAFALLPLAAACARTPLSNFNVGAIARGVSGTWYFGANMEFIGATMQQTVHAEQSAISHAWLSGEKALAAITVNYTPCGHCRQFMNELNSGLDLRIHLPGREAHALRDYLPDAFGPKDLEIKTLLMDEQDHGYALTGDALSQAAIAAANRSHMPYSKSPSGVALECKDGRIFSGSYAENAAFNPTLPPLQGALILLNLKGYDYPDIQRAVLAEKADAPLIQWDATSATLKALGCHSIDRVLLA</sequence>
<reference key="1">
    <citation type="journal article" date="2005" name="Nucleic Acids Res.">
        <title>Genome dynamics and diversity of Shigella species, the etiologic agents of bacillary dysentery.</title>
        <authorList>
            <person name="Yang F."/>
            <person name="Yang J."/>
            <person name="Zhang X."/>
            <person name="Chen L."/>
            <person name="Jiang Y."/>
            <person name="Yan Y."/>
            <person name="Tang X."/>
            <person name="Wang J."/>
            <person name="Xiong Z."/>
            <person name="Dong J."/>
            <person name="Xue Y."/>
            <person name="Zhu Y."/>
            <person name="Xu X."/>
            <person name="Sun L."/>
            <person name="Chen S."/>
            <person name="Nie H."/>
            <person name="Peng J."/>
            <person name="Xu J."/>
            <person name="Wang Y."/>
            <person name="Yuan Z."/>
            <person name="Wen Y."/>
            <person name="Yao Z."/>
            <person name="Shen Y."/>
            <person name="Qiang B."/>
            <person name="Hou Y."/>
            <person name="Yu J."/>
            <person name="Jin Q."/>
        </authorList>
    </citation>
    <scope>NUCLEOTIDE SEQUENCE [LARGE SCALE GENOMIC DNA]</scope>
    <source>
        <strain>Ss046</strain>
    </source>
</reference>
<name>CDD_SHISS</name>
<accession>Q3Z062</accession>
<gene>
    <name evidence="1" type="primary">cdd</name>
    <name type="ordered locus">SSON_2199</name>
</gene>
<dbReference type="EC" id="3.5.4.5" evidence="1"/>
<dbReference type="EMBL" id="CP000038">
    <property type="protein sequence ID" value="AAZ88850.1"/>
    <property type="molecule type" value="Genomic_DNA"/>
</dbReference>
<dbReference type="RefSeq" id="WP_000553555.1">
    <property type="nucleotide sequence ID" value="NC_007384.1"/>
</dbReference>
<dbReference type="SMR" id="Q3Z062"/>
<dbReference type="GeneID" id="93775039"/>
<dbReference type="KEGG" id="ssn:SSON_2199"/>
<dbReference type="HOGENOM" id="CLU_052424_0_0_6"/>
<dbReference type="Proteomes" id="UP000002529">
    <property type="component" value="Chromosome"/>
</dbReference>
<dbReference type="GO" id="GO:0005829">
    <property type="term" value="C:cytosol"/>
    <property type="evidence" value="ECO:0007669"/>
    <property type="project" value="TreeGrafter"/>
</dbReference>
<dbReference type="GO" id="GO:0004126">
    <property type="term" value="F:cytidine deaminase activity"/>
    <property type="evidence" value="ECO:0007669"/>
    <property type="project" value="UniProtKB-UniRule"/>
</dbReference>
<dbReference type="GO" id="GO:0042802">
    <property type="term" value="F:identical protein binding"/>
    <property type="evidence" value="ECO:0007669"/>
    <property type="project" value="UniProtKB-ARBA"/>
</dbReference>
<dbReference type="GO" id="GO:0008270">
    <property type="term" value="F:zinc ion binding"/>
    <property type="evidence" value="ECO:0007669"/>
    <property type="project" value="UniProtKB-UniRule"/>
</dbReference>
<dbReference type="GO" id="GO:0009972">
    <property type="term" value="P:cytidine deamination"/>
    <property type="evidence" value="ECO:0007669"/>
    <property type="project" value="InterPro"/>
</dbReference>
<dbReference type="CDD" id="cd01283">
    <property type="entry name" value="cytidine_deaminase"/>
    <property type="match status" value="2"/>
</dbReference>
<dbReference type="FunFam" id="3.40.140.10:FF:000006">
    <property type="entry name" value="Cytidine deaminase"/>
    <property type="match status" value="1"/>
</dbReference>
<dbReference type="FunFam" id="3.40.140.10:FF:000007">
    <property type="entry name" value="Cytidine deaminase"/>
    <property type="match status" value="1"/>
</dbReference>
<dbReference type="Gene3D" id="3.40.140.10">
    <property type="entry name" value="Cytidine Deaminase, domain 2"/>
    <property type="match status" value="2"/>
</dbReference>
<dbReference type="HAMAP" id="MF_01558">
    <property type="entry name" value="Cyt_deam"/>
    <property type="match status" value="1"/>
</dbReference>
<dbReference type="InterPro" id="IPR016192">
    <property type="entry name" value="APOBEC/CMP_deaminase_Zn-bd"/>
</dbReference>
<dbReference type="InterPro" id="IPR002125">
    <property type="entry name" value="CMP_dCMP_dom"/>
</dbReference>
<dbReference type="InterPro" id="IPR013171">
    <property type="entry name" value="Cyd/dCyd_deaminase_Zn-bd"/>
</dbReference>
<dbReference type="InterPro" id="IPR050202">
    <property type="entry name" value="Cyt/Deoxycyt_deaminase"/>
</dbReference>
<dbReference type="InterPro" id="IPR006263">
    <property type="entry name" value="Cyt_deam_dimer"/>
</dbReference>
<dbReference type="InterPro" id="IPR016193">
    <property type="entry name" value="Cytidine_deaminase-like"/>
</dbReference>
<dbReference type="InterPro" id="IPR020797">
    <property type="entry name" value="Cytidine_deaminase_bacteria"/>
</dbReference>
<dbReference type="NCBIfam" id="TIGR01355">
    <property type="entry name" value="cyt_deam_dimer"/>
    <property type="match status" value="1"/>
</dbReference>
<dbReference type="NCBIfam" id="NF006537">
    <property type="entry name" value="PRK09027.1"/>
    <property type="match status" value="1"/>
</dbReference>
<dbReference type="PANTHER" id="PTHR11644">
    <property type="entry name" value="CYTIDINE DEAMINASE"/>
    <property type="match status" value="1"/>
</dbReference>
<dbReference type="PANTHER" id="PTHR11644:SF2">
    <property type="entry name" value="CYTIDINE DEAMINASE"/>
    <property type="match status" value="1"/>
</dbReference>
<dbReference type="Pfam" id="PF00383">
    <property type="entry name" value="dCMP_cyt_deam_1"/>
    <property type="match status" value="1"/>
</dbReference>
<dbReference type="Pfam" id="PF08211">
    <property type="entry name" value="dCMP_cyt_deam_2"/>
    <property type="match status" value="1"/>
</dbReference>
<dbReference type="PIRSF" id="PIRSF006334">
    <property type="entry name" value="Cdd_plus_pseudo"/>
    <property type="match status" value="1"/>
</dbReference>
<dbReference type="SUPFAM" id="SSF53927">
    <property type="entry name" value="Cytidine deaminase-like"/>
    <property type="match status" value="2"/>
</dbReference>
<dbReference type="PROSITE" id="PS00903">
    <property type="entry name" value="CYT_DCMP_DEAMINASES_1"/>
    <property type="match status" value="1"/>
</dbReference>
<dbReference type="PROSITE" id="PS51747">
    <property type="entry name" value="CYT_DCMP_DEAMINASES_2"/>
    <property type="match status" value="2"/>
</dbReference>
<organism>
    <name type="scientific">Shigella sonnei (strain Ss046)</name>
    <dbReference type="NCBI Taxonomy" id="300269"/>
    <lineage>
        <taxon>Bacteria</taxon>
        <taxon>Pseudomonadati</taxon>
        <taxon>Pseudomonadota</taxon>
        <taxon>Gammaproteobacteria</taxon>
        <taxon>Enterobacterales</taxon>
        <taxon>Enterobacteriaceae</taxon>
        <taxon>Shigella</taxon>
    </lineage>
</organism>
<proteinExistence type="inferred from homology"/>
<protein>
    <recommendedName>
        <fullName evidence="1">Cytidine deaminase</fullName>
        <ecNumber evidence="1">3.5.4.5</ecNumber>
    </recommendedName>
    <alternativeName>
        <fullName evidence="1">Cytidine aminohydrolase</fullName>
        <shortName evidence="1">CDA</shortName>
    </alternativeName>
</protein>
<comment type="function">
    <text evidence="1">This enzyme scavenges exogenous and endogenous cytidine and 2'-deoxycytidine for UMP synthesis.</text>
</comment>
<comment type="catalytic activity">
    <reaction evidence="1">
        <text>cytidine + H2O + H(+) = uridine + NH4(+)</text>
        <dbReference type="Rhea" id="RHEA:16069"/>
        <dbReference type="ChEBI" id="CHEBI:15377"/>
        <dbReference type="ChEBI" id="CHEBI:15378"/>
        <dbReference type="ChEBI" id="CHEBI:16704"/>
        <dbReference type="ChEBI" id="CHEBI:17562"/>
        <dbReference type="ChEBI" id="CHEBI:28938"/>
        <dbReference type="EC" id="3.5.4.5"/>
    </reaction>
</comment>
<comment type="catalytic activity">
    <reaction evidence="1">
        <text>2'-deoxycytidine + H2O + H(+) = 2'-deoxyuridine + NH4(+)</text>
        <dbReference type="Rhea" id="RHEA:13433"/>
        <dbReference type="ChEBI" id="CHEBI:15377"/>
        <dbReference type="ChEBI" id="CHEBI:15378"/>
        <dbReference type="ChEBI" id="CHEBI:15698"/>
        <dbReference type="ChEBI" id="CHEBI:16450"/>
        <dbReference type="ChEBI" id="CHEBI:28938"/>
        <dbReference type="EC" id="3.5.4.5"/>
    </reaction>
</comment>
<comment type="cofactor">
    <cofactor evidence="1">
        <name>Zn(2+)</name>
        <dbReference type="ChEBI" id="CHEBI:29105"/>
    </cofactor>
    <text evidence="1">Binds 1 zinc ion.</text>
</comment>
<comment type="subunit">
    <text evidence="1">Homodimer.</text>
</comment>
<comment type="similarity">
    <text evidence="1">Belongs to the cytidine and deoxycytidylate deaminase family.</text>
</comment>
<keyword id="KW-0378">Hydrolase</keyword>
<keyword id="KW-0479">Metal-binding</keyword>
<keyword id="KW-1185">Reference proteome</keyword>
<keyword id="KW-0862">Zinc</keyword>